<sequence>MDIKEIALGQIRDSIATKQKCIDSILGDITKAGEMVSKVLQSGNTVYLCGNGGSSCDASHIAAELVVRYKSGNERKALPALSLSGDSAVLTACSNDYGYEEIFARQIEAFGRKGDLLIGLSTSGNSKNVLLALEKAKTRGVKTISLLGGDGGRIKNLSDLDIIVPSKVTARIQESHILIGHILCSIVEYNLFKME</sequence>
<name>GMHA_LEPBJ</name>
<organism>
    <name type="scientific">Leptospira borgpetersenii serovar Hardjo-bovis (strain JB197)</name>
    <dbReference type="NCBI Taxonomy" id="355277"/>
    <lineage>
        <taxon>Bacteria</taxon>
        <taxon>Pseudomonadati</taxon>
        <taxon>Spirochaetota</taxon>
        <taxon>Spirochaetia</taxon>
        <taxon>Leptospirales</taxon>
        <taxon>Leptospiraceae</taxon>
        <taxon>Leptospira</taxon>
    </lineage>
</organism>
<protein>
    <recommendedName>
        <fullName evidence="1">Phosphoheptose isomerase</fullName>
        <ecNumber evidence="1">5.3.1.28</ecNumber>
    </recommendedName>
    <alternativeName>
        <fullName evidence="1">Sedoheptulose 7-phosphate isomerase</fullName>
    </alternativeName>
</protein>
<gene>
    <name evidence="1" type="primary">gmhA</name>
    <name type="ordered locus">LBJ_1916</name>
</gene>
<reference key="1">
    <citation type="journal article" date="2006" name="Proc. Natl. Acad. Sci. U.S.A.">
        <title>Genome reduction in Leptospira borgpetersenii reflects limited transmission potential.</title>
        <authorList>
            <person name="Bulach D.M."/>
            <person name="Zuerner R.L."/>
            <person name="Wilson P."/>
            <person name="Seemann T."/>
            <person name="McGrath A."/>
            <person name="Cullen P.A."/>
            <person name="Davis J."/>
            <person name="Johnson M."/>
            <person name="Kuczek E."/>
            <person name="Alt D.P."/>
            <person name="Peterson-Burch B."/>
            <person name="Coppel R.L."/>
            <person name="Rood J.I."/>
            <person name="Davies J.K."/>
            <person name="Adler B."/>
        </authorList>
    </citation>
    <scope>NUCLEOTIDE SEQUENCE [LARGE SCALE GENOMIC DNA]</scope>
    <source>
        <strain>JB197</strain>
    </source>
</reference>
<evidence type="ECO:0000255" key="1">
    <source>
        <dbReference type="HAMAP-Rule" id="MF_00067"/>
    </source>
</evidence>
<accession>Q04RN4</accession>
<dbReference type="EC" id="5.3.1.28" evidence="1"/>
<dbReference type="EMBL" id="CP000350">
    <property type="protein sequence ID" value="ABJ76436.1"/>
    <property type="molecule type" value="Genomic_DNA"/>
</dbReference>
<dbReference type="RefSeq" id="WP_002750963.1">
    <property type="nucleotide sequence ID" value="NC_008510.1"/>
</dbReference>
<dbReference type="SMR" id="Q04RN4"/>
<dbReference type="KEGG" id="lbj:LBJ_1916"/>
<dbReference type="HOGENOM" id="CLU_080999_4_0_12"/>
<dbReference type="UniPathway" id="UPA00041">
    <property type="reaction ID" value="UER00436"/>
</dbReference>
<dbReference type="Proteomes" id="UP000000656">
    <property type="component" value="Chromosome 1"/>
</dbReference>
<dbReference type="GO" id="GO:0005737">
    <property type="term" value="C:cytoplasm"/>
    <property type="evidence" value="ECO:0007669"/>
    <property type="project" value="UniProtKB-SubCell"/>
</dbReference>
<dbReference type="GO" id="GO:0097367">
    <property type="term" value="F:carbohydrate derivative binding"/>
    <property type="evidence" value="ECO:0007669"/>
    <property type="project" value="InterPro"/>
</dbReference>
<dbReference type="GO" id="GO:0008968">
    <property type="term" value="F:D-sedoheptulose 7-phosphate isomerase activity"/>
    <property type="evidence" value="ECO:0007669"/>
    <property type="project" value="UniProtKB-UniRule"/>
</dbReference>
<dbReference type="GO" id="GO:0008270">
    <property type="term" value="F:zinc ion binding"/>
    <property type="evidence" value="ECO:0007669"/>
    <property type="project" value="UniProtKB-UniRule"/>
</dbReference>
<dbReference type="GO" id="GO:0005975">
    <property type="term" value="P:carbohydrate metabolic process"/>
    <property type="evidence" value="ECO:0007669"/>
    <property type="project" value="UniProtKB-UniRule"/>
</dbReference>
<dbReference type="GO" id="GO:2001061">
    <property type="term" value="P:D-glycero-D-manno-heptose 7-phosphate biosynthetic process"/>
    <property type="evidence" value="ECO:0007669"/>
    <property type="project" value="UniProtKB-UniPathway"/>
</dbReference>
<dbReference type="CDD" id="cd05006">
    <property type="entry name" value="SIS_GmhA"/>
    <property type="match status" value="1"/>
</dbReference>
<dbReference type="Gene3D" id="3.40.50.10490">
    <property type="entry name" value="Glucose-6-phosphate isomerase like protein, domain 1"/>
    <property type="match status" value="1"/>
</dbReference>
<dbReference type="HAMAP" id="MF_00067">
    <property type="entry name" value="GmhA"/>
    <property type="match status" value="1"/>
</dbReference>
<dbReference type="InterPro" id="IPR035461">
    <property type="entry name" value="GmhA/DiaA"/>
</dbReference>
<dbReference type="InterPro" id="IPR004515">
    <property type="entry name" value="Phosphoheptose_Isoase"/>
</dbReference>
<dbReference type="InterPro" id="IPR001347">
    <property type="entry name" value="SIS_dom"/>
</dbReference>
<dbReference type="InterPro" id="IPR046348">
    <property type="entry name" value="SIS_dom_sf"/>
</dbReference>
<dbReference type="InterPro" id="IPR050099">
    <property type="entry name" value="SIS_GmhA/DiaA_subfam"/>
</dbReference>
<dbReference type="PANTHER" id="PTHR30390:SF6">
    <property type="entry name" value="DNAA INITIATOR-ASSOCIATING PROTEIN DIAA"/>
    <property type="match status" value="1"/>
</dbReference>
<dbReference type="PANTHER" id="PTHR30390">
    <property type="entry name" value="SEDOHEPTULOSE 7-PHOSPHATE ISOMERASE / DNAA INITIATOR-ASSOCIATING FACTOR FOR REPLICATION INITIATION"/>
    <property type="match status" value="1"/>
</dbReference>
<dbReference type="Pfam" id="PF13580">
    <property type="entry name" value="SIS_2"/>
    <property type="match status" value="1"/>
</dbReference>
<dbReference type="SUPFAM" id="SSF53697">
    <property type="entry name" value="SIS domain"/>
    <property type="match status" value="1"/>
</dbReference>
<dbReference type="PROSITE" id="PS51464">
    <property type="entry name" value="SIS"/>
    <property type="match status" value="1"/>
</dbReference>
<proteinExistence type="inferred from homology"/>
<feature type="chain" id="PRO_1000009075" description="Phosphoheptose isomerase">
    <location>
        <begin position="1"/>
        <end position="195"/>
    </location>
</feature>
<feature type="domain" description="SIS" evidence="1">
    <location>
        <begin position="36"/>
        <end position="195"/>
    </location>
</feature>
<feature type="binding site" evidence="1">
    <location>
        <begin position="51"/>
        <end position="53"/>
    </location>
    <ligand>
        <name>substrate</name>
    </ligand>
</feature>
<feature type="binding site" evidence="1">
    <location>
        <position position="60"/>
    </location>
    <ligand>
        <name>Zn(2+)</name>
        <dbReference type="ChEBI" id="CHEBI:29105"/>
    </ligand>
</feature>
<feature type="binding site" evidence="1">
    <location>
        <position position="64"/>
    </location>
    <ligand>
        <name>substrate</name>
    </ligand>
</feature>
<feature type="binding site" evidence="1">
    <location>
        <position position="64"/>
    </location>
    <ligand>
        <name>Zn(2+)</name>
        <dbReference type="ChEBI" id="CHEBI:29105"/>
    </ligand>
</feature>
<feature type="binding site" evidence="1">
    <location>
        <begin position="95"/>
        <end position="96"/>
    </location>
    <ligand>
        <name>substrate</name>
    </ligand>
</feature>
<feature type="binding site" evidence="1">
    <location>
        <begin position="121"/>
        <end position="123"/>
    </location>
    <ligand>
        <name>substrate</name>
    </ligand>
</feature>
<feature type="binding site" evidence="1">
    <location>
        <position position="126"/>
    </location>
    <ligand>
        <name>substrate</name>
    </ligand>
</feature>
<feature type="binding site" evidence="1">
    <location>
        <position position="173"/>
    </location>
    <ligand>
        <name>substrate</name>
    </ligand>
</feature>
<feature type="binding site" evidence="1">
    <location>
        <position position="173"/>
    </location>
    <ligand>
        <name>Zn(2+)</name>
        <dbReference type="ChEBI" id="CHEBI:29105"/>
    </ligand>
</feature>
<feature type="binding site" evidence="1">
    <location>
        <position position="181"/>
    </location>
    <ligand>
        <name>Zn(2+)</name>
        <dbReference type="ChEBI" id="CHEBI:29105"/>
    </ligand>
</feature>
<comment type="function">
    <text evidence="1">Catalyzes the isomerization of sedoheptulose 7-phosphate in D-glycero-D-manno-heptose 7-phosphate.</text>
</comment>
<comment type="catalytic activity">
    <reaction evidence="1">
        <text>2 D-sedoheptulose 7-phosphate = D-glycero-alpha-D-manno-heptose 7-phosphate + D-glycero-beta-D-manno-heptose 7-phosphate</text>
        <dbReference type="Rhea" id="RHEA:27489"/>
        <dbReference type="ChEBI" id="CHEBI:57483"/>
        <dbReference type="ChEBI" id="CHEBI:60203"/>
        <dbReference type="ChEBI" id="CHEBI:60204"/>
        <dbReference type="EC" id="5.3.1.28"/>
    </reaction>
</comment>
<comment type="cofactor">
    <cofactor evidence="1">
        <name>Zn(2+)</name>
        <dbReference type="ChEBI" id="CHEBI:29105"/>
    </cofactor>
    <text evidence="1">Binds 1 zinc ion per subunit.</text>
</comment>
<comment type="pathway">
    <text evidence="1">Carbohydrate biosynthesis; D-glycero-D-manno-heptose 7-phosphate biosynthesis; D-glycero-alpha-D-manno-heptose 7-phosphate and D-glycero-beta-D-manno-heptose 7-phosphate from sedoheptulose 7-phosphate: step 1/1.</text>
</comment>
<comment type="subcellular location">
    <subcellularLocation>
        <location evidence="1">Cytoplasm</location>
    </subcellularLocation>
</comment>
<comment type="miscellaneous">
    <text evidence="1">The reaction produces a racemic mixture of D-glycero-alpha-D-manno-heptose 7-phosphate and D-glycero-beta-D-manno-heptose 7-phosphate.</text>
</comment>
<comment type="similarity">
    <text evidence="1">Belongs to the SIS family. GmhA subfamily.</text>
</comment>
<keyword id="KW-0119">Carbohydrate metabolism</keyword>
<keyword id="KW-0963">Cytoplasm</keyword>
<keyword id="KW-0413">Isomerase</keyword>
<keyword id="KW-0479">Metal-binding</keyword>
<keyword id="KW-0862">Zinc</keyword>